<gene>
    <name type="primary">Hbp1</name>
</gene>
<dbReference type="EMBL" id="BC026853">
    <property type="protein sequence ID" value="AAH26853.1"/>
    <property type="molecule type" value="mRNA"/>
</dbReference>
<dbReference type="EMBL" id="AK028674">
    <property type="protein sequence ID" value="BAC26060.1"/>
    <property type="molecule type" value="mRNA"/>
</dbReference>
<dbReference type="EMBL" id="AK082770">
    <property type="protein sequence ID" value="BAC38611.1"/>
    <property type="status" value="ALT_INIT"/>
    <property type="molecule type" value="mRNA"/>
</dbReference>
<dbReference type="EMBL" id="AK133127">
    <property type="protein sequence ID" value="BAE21520.1"/>
    <property type="molecule type" value="mRNA"/>
</dbReference>
<dbReference type="RefSeq" id="NP_001348857.1">
    <molecule id="Q8R316-1"/>
    <property type="nucleotide sequence ID" value="NM_001361928.1"/>
</dbReference>
<dbReference type="RefSeq" id="NP_694878.2">
    <property type="nucleotide sequence ID" value="NM_153198.2"/>
</dbReference>
<dbReference type="RefSeq" id="NP_818774.2">
    <property type="nucleotide sequence ID" value="NM_177993.3"/>
</dbReference>
<dbReference type="RefSeq" id="XP_017170701.1">
    <property type="nucleotide sequence ID" value="XM_017315212.1"/>
</dbReference>
<dbReference type="RefSeq" id="XP_030102811.1">
    <molecule id="Q8R316-1"/>
    <property type="nucleotide sequence ID" value="XM_030246951.2"/>
</dbReference>
<dbReference type="PDB" id="1S5R">
    <property type="method" value="NMR"/>
    <property type="chains" value="A=358-380"/>
</dbReference>
<dbReference type="PDB" id="1V06">
    <property type="method" value="NMR"/>
    <property type="chains" value="A=208-345"/>
</dbReference>
<dbReference type="PDBsum" id="1S5R"/>
<dbReference type="PDBsum" id="1V06"/>
<dbReference type="BMRB" id="Q8R316"/>
<dbReference type="SMR" id="Q8R316"/>
<dbReference type="BioGRID" id="215977">
    <property type="interactions" value="4"/>
</dbReference>
<dbReference type="FunCoup" id="Q8R316">
    <property type="interactions" value="2922"/>
</dbReference>
<dbReference type="STRING" id="10090.ENSMUSP00000131158"/>
<dbReference type="GlyGen" id="Q8R316">
    <property type="glycosylation" value="1 site, 1 O-linked glycan (1 site)"/>
</dbReference>
<dbReference type="iPTMnet" id="Q8R316"/>
<dbReference type="PhosphoSitePlus" id="Q8R316"/>
<dbReference type="jPOST" id="Q8R316"/>
<dbReference type="PaxDb" id="10090-ENSMUSP00000131158"/>
<dbReference type="ProteomicsDB" id="269722">
    <molecule id="Q8R316-1"/>
</dbReference>
<dbReference type="ProteomicsDB" id="269723">
    <molecule id="Q8R316-2"/>
</dbReference>
<dbReference type="DNASU" id="73389"/>
<dbReference type="GeneID" id="73389"/>
<dbReference type="KEGG" id="mmu:73389"/>
<dbReference type="AGR" id="MGI:894659"/>
<dbReference type="CTD" id="26959"/>
<dbReference type="MGI" id="MGI:894659">
    <property type="gene designation" value="Hbp1"/>
</dbReference>
<dbReference type="eggNOG" id="ENOG502QR1P">
    <property type="taxonomic scope" value="Eukaryota"/>
</dbReference>
<dbReference type="InParanoid" id="Q8R316"/>
<dbReference type="OrthoDB" id="1919336at2759"/>
<dbReference type="PhylomeDB" id="Q8R316"/>
<dbReference type="BioGRID-ORCS" id="73389">
    <property type="hits" value="6 hits in 78 CRISPR screens"/>
</dbReference>
<dbReference type="ChiTaRS" id="Hbp1">
    <property type="organism name" value="mouse"/>
</dbReference>
<dbReference type="EvolutionaryTrace" id="Q8R316"/>
<dbReference type="PRO" id="PR:Q8R316"/>
<dbReference type="Proteomes" id="UP000000589">
    <property type="component" value="Unplaced"/>
</dbReference>
<dbReference type="RNAct" id="Q8R316">
    <property type="molecule type" value="protein"/>
</dbReference>
<dbReference type="GO" id="GO:0005634">
    <property type="term" value="C:nucleus"/>
    <property type="evidence" value="ECO:0007669"/>
    <property type="project" value="UniProtKB-SubCell"/>
</dbReference>
<dbReference type="GO" id="GO:0003677">
    <property type="term" value="F:DNA binding"/>
    <property type="evidence" value="ECO:0007669"/>
    <property type="project" value="UniProtKB-KW"/>
</dbReference>
<dbReference type="GO" id="GO:0003723">
    <property type="term" value="F:RNA binding"/>
    <property type="evidence" value="ECO:0007669"/>
    <property type="project" value="InterPro"/>
</dbReference>
<dbReference type="GO" id="GO:0032369">
    <property type="term" value="P:negative regulation of lipid transport"/>
    <property type="evidence" value="ECO:0000314"/>
    <property type="project" value="BHF-UCL"/>
</dbReference>
<dbReference type="GO" id="GO:0010745">
    <property type="term" value="P:negative regulation of macrophage derived foam cell differentiation"/>
    <property type="evidence" value="ECO:0000305"/>
    <property type="project" value="BHF-UCL"/>
</dbReference>
<dbReference type="GO" id="GO:1903427">
    <property type="term" value="P:negative regulation of reactive oxygen species biosynthetic process"/>
    <property type="evidence" value="ECO:0000314"/>
    <property type="project" value="BHF-UCL"/>
</dbReference>
<dbReference type="GO" id="GO:0006355">
    <property type="term" value="P:regulation of DNA-templated transcription"/>
    <property type="evidence" value="ECO:0007669"/>
    <property type="project" value="InterPro"/>
</dbReference>
<dbReference type="GO" id="GO:0016055">
    <property type="term" value="P:Wnt signaling pathway"/>
    <property type="evidence" value="ECO:0007669"/>
    <property type="project" value="UniProtKB-KW"/>
</dbReference>
<dbReference type="CDD" id="cd21988">
    <property type="entry name" value="HMG-box_HBP1"/>
    <property type="match status" value="1"/>
</dbReference>
<dbReference type="DisProt" id="DP01323"/>
<dbReference type="FunFam" id="1.10.30.10:FF:000020">
    <property type="entry name" value="HMG box-containing protein 1"/>
    <property type="match status" value="1"/>
</dbReference>
<dbReference type="Gene3D" id="1.10.30.10">
    <property type="entry name" value="High mobility group box domain"/>
    <property type="match status" value="1"/>
</dbReference>
<dbReference type="IDEAL" id="IID50097"/>
<dbReference type="InterPro" id="IPR003652">
    <property type="entry name" value="Ataxin_AXH_dom"/>
</dbReference>
<dbReference type="InterPro" id="IPR036096">
    <property type="entry name" value="Ataxin_AXH_dom_sf"/>
</dbReference>
<dbReference type="InterPro" id="IPR039655">
    <property type="entry name" value="HBP1"/>
</dbReference>
<dbReference type="InterPro" id="IPR009071">
    <property type="entry name" value="HMG_box_dom"/>
</dbReference>
<dbReference type="InterPro" id="IPR036910">
    <property type="entry name" value="HMG_box_dom_sf"/>
</dbReference>
<dbReference type="PANTHER" id="PTHR15499">
    <property type="entry name" value="HMG BOX-CONTAINING PROTEIN 1"/>
    <property type="match status" value="1"/>
</dbReference>
<dbReference type="PANTHER" id="PTHR15499:SF3">
    <property type="entry name" value="HMG BOX-CONTAINING PROTEIN 1"/>
    <property type="match status" value="1"/>
</dbReference>
<dbReference type="Pfam" id="PF08517">
    <property type="entry name" value="AXH"/>
    <property type="match status" value="1"/>
</dbReference>
<dbReference type="Pfam" id="PF00505">
    <property type="entry name" value="HMG_box"/>
    <property type="match status" value="1"/>
</dbReference>
<dbReference type="SMART" id="SM00536">
    <property type="entry name" value="AXH"/>
    <property type="match status" value="1"/>
</dbReference>
<dbReference type="SMART" id="SM00398">
    <property type="entry name" value="HMG"/>
    <property type="match status" value="1"/>
</dbReference>
<dbReference type="SUPFAM" id="SSF102031">
    <property type="entry name" value="AXH domain"/>
    <property type="match status" value="1"/>
</dbReference>
<dbReference type="SUPFAM" id="SSF47095">
    <property type="entry name" value="HMG-box"/>
    <property type="match status" value="1"/>
</dbReference>
<dbReference type="PROSITE" id="PS51148">
    <property type="entry name" value="AXH"/>
    <property type="match status" value="1"/>
</dbReference>
<dbReference type="PROSITE" id="PS50118">
    <property type="entry name" value="HMG_BOX_2"/>
    <property type="match status" value="1"/>
</dbReference>
<name>HBP1_MOUSE</name>
<reference key="1">
    <citation type="journal article" date="2005" name="Science">
        <title>The transcriptional landscape of the mammalian genome.</title>
        <authorList>
            <person name="Carninci P."/>
            <person name="Kasukawa T."/>
            <person name="Katayama S."/>
            <person name="Gough J."/>
            <person name="Frith M.C."/>
            <person name="Maeda N."/>
            <person name="Oyama R."/>
            <person name="Ravasi T."/>
            <person name="Lenhard B."/>
            <person name="Wells C."/>
            <person name="Kodzius R."/>
            <person name="Shimokawa K."/>
            <person name="Bajic V.B."/>
            <person name="Brenner S.E."/>
            <person name="Batalov S."/>
            <person name="Forrest A.R."/>
            <person name="Zavolan M."/>
            <person name="Davis M.J."/>
            <person name="Wilming L.G."/>
            <person name="Aidinis V."/>
            <person name="Allen J.E."/>
            <person name="Ambesi-Impiombato A."/>
            <person name="Apweiler R."/>
            <person name="Aturaliya R.N."/>
            <person name="Bailey T.L."/>
            <person name="Bansal M."/>
            <person name="Baxter L."/>
            <person name="Beisel K.W."/>
            <person name="Bersano T."/>
            <person name="Bono H."/>
            <person name="Chalk A.M."/>
            <person name="Chiu K.P."/>
            <person name="Choudhary V."/>
            <person name="Christoffels A."/>
            <person name="Clutterbuck D.R."/>
            <person name="Crowe M.L."/>
            <person name="Dalla E."/>
            <person name="Dalrymple B.P."/>
            <person name="de Bono B."/>
            <person name="Della Gatta G."/>
            <person name="di Bernardo D."/>
            <person name="Down T."/>
            <person name="Engstrom P."/>
            <person name="Fagiolini M."/>
            <person name="Faulkner G."/>
            <person name="Fletcher C.F."/>
            <person name="Fukushima T."/>
            <person name="Furuno M."/>
            <person name="Futaki S."/>
            <person name="Gariboldi M."/>
            <person name="Georgii-Hemming P."/>
            <person name="Gingeras T.R."/>
            <person name="Gojobori T."/>
            <person name="Green R.E."/>
            <person name="Gustincich S."/>
            <person name="Harbers M."/>
            <person name="Hayashi Y."/>
            <person name="Hensch T.K."/>
            <person name="Hirokawa N."/>
            <person name="Hill D."/>
            <person name="Huminiecki L."/>
            <person name="Iacono M."/>
            <person name="Ikeo K."/>
            <person name="Iwama A."/>
            <person name="Ishikawa T."/>
            <person name="Jakt M."/>
            <person name="Kanapin A."/>
            <person name="Katoh M."/>
            <person name="Kawasawa Y."/>
            <person name="Kelso J."/>
            <person name="Kitamura H."/>
            <person name="Kitano H."/>
            <person name="Kollias G."/>
            <person name="Krishnan S.P."/>
            <person name="Kruger A."/>
            <person name="Kummerfeld S.K."/>
            <person name="Kurochkin I.V."/>
            <person name="Lareau L.F."/>
            <person name="Lazarevic D."/>
            <person name="Lipovich L."/>
            <person name="Liu J."/>
            <person name="Liuni S."/>
            <person name="McWilliam S."/>
            <person name="Madan Babu M."/>
            <person name="Madera M."/>
            <person name="Marchionni L."/>
            <person name="Matsuda H."/>
            <person name="Matsuzawa S."/>
            <person name="Miki H."/>
            <person name="Mignone F."/>
            <person name="Miyake S."/>
            <person name="Morris K."/>
            <person name="Mottagui-Tabar S."/>
            <person name="Mulder N."/>
            <person name="Nakano N."/>
            <person name="Nakauchi H."/>
            <person name="Ng P."/>
            <person name="Nilsson R."/>
            <person name="Nishiguchi S."/>
            <person name="Nishikawa S."/>
            <person name="Nori F."/>
            <person name="Ohara O."/>
            <person name="Okazaki Y."/>
            <person name="Orlando V."/>
            <person name="Pang K.C."/>
            <person name="Pavan W.J."/>
            <person name="Pavesi G."/>
            <person name="Pesole G."/>
            <person name="Petrovsky N."/>
            <person name="Piazza S."/>
            <person name="Reed J."/>
            <person name="Reid J.F."/>
            <person name="Ring B.Z."/>
            <person name="Ringwald M."/>
            <person name="Rost B."/>
            <person name="Ruan Y."/>
            <person name="Salzberg S.L."/>
            <person name="Sandelin A."/>
            <person name="Schneider C."/>
            <person name="Schoenbach C."/>
            <person name="Sekiguchi K."/>
            <person name="Semple C.A."/>
            <person name="Seno S."/>
            <person name="Sessa L."/>
            <person name="Sheng Y."/>
            <person name="Shibata Y."/>
            <person name="Shimada H."/>
            <person name="Shimada K."/>
            <person name="Silva D."/>
            <person name="Sinclair B."/>
            <person name="Sperling S."/>
            <person name="Stupka E."/>
            <person name="Sugiura K."/>
            <person name="Sultana R."/>
            <person name="Takenaka Y."/>
            <person name="Taki K."/>
            <person name="Tammoja K."/>
            <person name="Tan S.L."/>
            <person name="Tang S."/>
            <person name="Taylor M.S."/>
            <person name="Tegner J."/>
            <person name="Teichmann S.A."/>
            <person name="Ueda H.R."/>
            <person name="van Nimwegen E."/>
            <person name="Verardo R."/>
            <person name="Wei C.L."/>
            <person name="Yagi K."/>
            <person name="Yamanishi H."/>
            <person name="Zabarovsky E."/>
            <person name="Zhu S."/>
            <person name="Zimmer A."/>
            <person name="Hide W."/>
            <person name="Bult C."/>
            <person name="Grimmond S.M."/>
            <person name="Teasdale R.D."/>
            <person name="Liu E.T."/>
            <person name="Brusic V."/>
            <person name="Quackenbush J."/>
            <person name="Wahlestedt C."/>
            <person name="Mattick J.S."/>
            <person name="Hume D.A."/>
            <person name="Kai C."/>
            <person name="Sasaki D."/>
            <person name="Tomaru Y."/>
            <person name="Fukuda S."/>
            <person name="Kanamori-Katayama M."/>
            <person name="Suzuki M."/>
            <person name="Aoki J."/>
            <person name="Arakawa T."/>
            <person name="Iida J."/>
            <person name="Imamura K."/>
            <person name="Itoh M."/>
            <person name="Kato T."/>
            <person name="Kawaji H."/>
            <person name="Kawagashira N."/>
            <person name="Kawashima T."/>
            <person name="Kojima M."/>
            <person name="Kondo S."/>
            <person name="Konno H."/>
            <person name="Nakano K."/>
            <person name="Ninomiya N."/>
            <person name="Nishio T."/>
            <person name="Okada M."/>
            <person name="Plessy C."/>
            <person name="Shibata K."/>
            <person name="Shiraki T."/>
            <person name="Suzuki S."/>
            <person name="Tagami M."/>
            <person name="Waki K."/>
            <person name="Watahiki A."/>
            <person name="Okamura-Oho Y."/>
            <person name="Suzuki H."/>
            <person name="Kawai J."/>
            <person name="Hayashizaki Y."/>
        </authorList>
    </citation>
    <scope>NUCLEOTIDE SEQUENCE [LARGE SCALE MRNA] (ISOFORMS 1 AND 2)</scope>
    <source>
        <strain>C57BL/6J</strain>
        <tissue>Skin</tissue>
        <tissue>Testis</tissue>
    </source>
</reference>
<reference key="2">
    <citation type="journal article" date="2004" name="Genome Res.">
        <title>The status, quality, and expansion of the NIH full-length cDNA project: the Mammalian Gene Collection (MGC).</title>
        <authorList>
            <consortium name="The MGC Project Team"/>
        </authorList>
    </citation>
    <scope>NUCLEOTIDE SEQUENCE [LARGE SCALE MRNA] (ISOFORM 1)</scope>
    <source>
        <strain>FVB/N</strain>
        <tissue>Mammary tumor</tissue>
    </source>
</reference>
<reference key="3">
    <citation type="journal article" date="1997" name="Oncogene">
        <title>The HMG-box transcription factor HBP1 is targeted by the pocket proteins and E1A.</title>
        <authorList>
            <person name="Lavender P."/>
            <person name="Vandel L."/>
            <person name="Bannister A.J."/>
            <person name="Kouzarides T."/>
        </authorList>
    </citation>
    <scope>INTERACTION WITH RB1</scope>
    <scope>FUNCTION</scope>
</reference>
<reference key="4">
    <citation type="journal article" date="2004" name="J. Biomol. NMR">
        <title>Assignment of the 1H, 13C, and 15N resonances of the AXH domain of the transcription factor HBP1.</title>
        <authorList>
            <person name="de Chiara C."/>
            <person name="Kelly G."/>
            <person name="Frenkiel T.A."/>
            <person name="Pastore A."/>
        </authorList>
    </citation>
    <scope>STRUCTURE BY NMR OF 208-345</scope>
</reference>
<reference key="5">
    <citation type="journal article" date="2004" name="Nat. Struct. Mol. Biol.">
        <title>HBP1 and Mad1 repressors bind the Sin3 corepressor PAH2 domain with opposite helical orientations.</title>
        <authorList>
            <person name="Swanson K.A."/>
            <person name="Knoepfler P.S."/>
            <person name="Huang K."/>
            <person name="Kang R.S."/>
            <person name="Cowley S.M."/>
            <person name="Laherty C.D."/>
            <person name="Eisenman R.N."/>
            <person name="Radhakrishnan I."/>
        </authorList>
    </citation>
    <scope>STRUCTURE BY NMR OF 233-255</scope>
    <scope>SUBCELLULAR LOCATION</scope>
    <scope>MUTAGENESIS OF LEU-370 AND MET-373</scope>
    <scope>INTERACTION WITH SIN3A</scope>
</reference>
<organism>
    <name type="scientific">Mus musculus</name>
    <name type="common">Mouse</name>
    <dbReference type="NCBI Taxonomy" id="10090"/>
    <lineage>
        <taxon>Eukaryota</taxon>
        <taxon>Metazoa</taxon>
        <taxon>Chordata</taxon>
        <taxon>Craniata</taxon>
        <taxon>Vertebrata</taxon>
        <taxon>Euteleostomi</taxon>
        <taxon>Mammalia</taxon>
        <taxon>Eutheria</taxon>
        <taxon>Euarchontoglires</taxon>
        <taxon>Glires</taxon>
        <taxon>Rodentia</taxon>
        <taxon>Myomorpha</taxon>
        <taxon>Muroidea</taxon>
        <taxon>Muridae</taxon>
        <taxon>Murinae</taxon>
        <taxon>Mus</taxon>
        <taxon>Mus</taxon>
    </lineage>
</organism>
<sequence>MVWEVKTNQMPNAVQKLLLVMDKRAPGMSDSLELLQCNENLPSSPGYNSCDEHMELDDLPELQAVQSDPTQSAIYQLSSDVSHQEYPRSSWSQNTSDIPENTHREDEVDWLTELANIATSPQSPLMQCSFYNRSSPVHIIATSKSLHSYARPPPVSSSSKSGPAFPHDHWKEETPVRHERANSESESGIFCMSSLSDDDDLGWCNSWPSTIWHCFLKGTRLCFHKESNKEWQDVEDFARAASCDNEEEIQMGTHKGYGSDGLKLLSHEESVSFGESVLKLTFDPGTVEDGLLTVECKLDHPFYVKNKGWSSFYPSLTVVQHGIPCCEIHIGDVCLPPGHPDAINFDDSGVFDTFKSYDFTPMDSSAVYVLSSMARQRRASLSCGGGPGTGQEFSGSEFSKSCGSPGSSQLSSSSLYAKAVKSHSSGTVSATSPNKCKRPMNAFMLFAKKYRVEYTQMYPGKDNRAISVILGDRWKKMKNEERRMYTLEAKALAEEQKRLNPDCWKRKRTNSGSQQH</sequence>
<evidence type="ECO:0000250" key="1">
    <source>
        <dbReference type="UniProtKB" id="O60381"/>
    </source>
</evidence>
<evidence type="ECO:0000255" key="2">
    <source>
        <dbReference type="PROSITE-ProRule" id="PRU00267"/>
    </source>
</evidence>
<evidence type="ECO:0000255" key="3">
    <source>
        <dbReference type="PROSITE-ProRule" id="PRU00496"/>
    </source>
</evidence>
<evidence type="ECO:0000256" key="4">
    <source>
        <dbReference type="SAM" id="MobiDB-lite"/>
    </source>
</evidence>
<evidence type="ECO:0000269" key="5">
    <source>
    </source>
</evidence>
<evidence type="ECO:0000269" key="6">
    <source>
    </source>
</evidence>
<evidence type="ECO:0000303" key="7">
    <source>
    </source>
</evidence>
<evidence type="ECO:0000305" key="8"/>
<evidence type="ECO:0007829" key="9">
    <source>
        <dbReference type="PDB" id="1S5R"/>
    </source>
</evidence>
<evidence type="ECO:0007829" key="10">
    <source>
        <dbReference type="PDB" id="1V06"/>
    </source>
</evidence>
<keyword id="KW-0002">3D-structure</keyword>
<keyword id="KW-0025">Alternative splicing</keyword>
<keyword id="KW-0238">DNA-binding</keyword>
<keyword id="KW-0539">Nucleus</keyword>
<keyword id="KW-1185">Reference proteome</keyword>
<keyword id="KW-0678">Repressor</keyword>
<keyword id="KW-0804">Transcription</keyword>
<keyword id="KW-0805">Transcription regulation</keyword>
<keyword id="KW-0832">Ubl conjugation</keyword>
<keyword id="KW-0879">Wnt signaling pathway</keyword>
<protein>
    <recommendedName>
        <fullName>HMG box-containing protein 1</fullName>
    </recommendedName>
    <alternativeName>
        <fullName>HMG box transcription factor 1</fullName>
    </alternativeName>
    <alternativeName>
        <fullName>High mobility group box transcription factor 1</fullName>
    </alternativeName>
</protein>
<accession>Q8R316</accession>
<accession>Q3V0I4</accession>
<accession>Q8BUS3</accession>
<accession>Q8C199</accession>
<feature type="chain" id="PRO_0000048547" description="HMG box-containing protein 1">
    <location>
        <begin position="1"/>
        <end position="516"/>
    </location>
</feature>
<feature type="domain" description="AXH" evidence="3">
    <location>
        <begin position="203"/>
        <end position="345"/>
    </location>
</feature>
<feature type="DNA-binding region" description="HMG box" evidence="2">
    <location>
        <begin position="436"/>
        <end position="504"/>
    </location>
</feature>
<feature type="region of interest" description="Disordered" evidence="4">
    <location>
        <begin position="150"/>
        <end position="182"/>
    </location>
</feature>
<feature type="compositionally biased region" description="Low complexity" evidence="4">
    <location>
        <begin position="156"/>
        <end position="165"/>
    </location>
</feature>
<feature type="compositionally biased region" description="Basic and acidic residues" evidence="4">
    <location>
        <begin position="166"/>
        <end position="182"/>
    </location>
</feature>
<feature type="splice variant" id="VSP_014657" description="In isoform 2." evidence="7">
    <location>
        <begin position="465"/>
        <end position="516"/>
    </location>
</feature>
<feature type="mutagenesis site" description="Strongly reduces Sin3A binding." evidence="5">
    <original>L</original>
    <variation>D</variation>
    <location>
        <position position="370"/>
    </location>
</feature>
<feature type="mutagenesis site" description="Strongly reduces Sin3A binding." evidence="5">
    <original>M</original>
    <variation>D</variation>
    <location>
        <position position="373"/>
    </location>
</feature>
<feature type="strand" evidence="10">
    <location>
        <begin position="220"/>
        <end position="223"/>
    </location>
</feature>
<feature type="helix" evidence="10">
    <location>
        <begin position="234"/>
        <end position="240"/>
    </location>
</feature>
<feature type="turn" evidence="10">
    <location>
        <begin position="247"/>
        <end position="249"/>
    </location>
</feature>
<feature type="turn" evidence="10">
    <location>
        <begin position="255"/>
        <end position="258"/>
    </location>
</feature>
<feature type="strand" evidence="10">
    <location>
        <begin position="262"/>
        <end position="272"/>
    </location>
</feature>
<feature type="strand" evidence="10">
    <location>
        <begin position="275"/>
        <end position="283"/>
    </location>
</feature>
<feature type="helix" evidence="10">
    <location>
        <begin position="287"/>
        <end position="289"/>
    </location>
</feature>
<feature type="strand" evidence="10">
    <location>
        <begin position="292"/>
        <end position="296"/>
    </location>
</feature>
<feature type="strand" evidence="10">
    <location>
        <begin position="302"/>
        <end position="304"/>
    </location>
</feature>
<feature type="turn" evidence="10">
    <location>
        <begin position="305"/>
        <end position="307"/>
    </location>
</feature>
<feature type="strand" evidence="10">
    <location>
        <begin position="308"/>
        <end position="313"/>
    </location>
</feature>
<feature type="helix" evidence="10">
    <location>
        <begin position="314"/>
        <end position="321"/>
    </location>
</feature>
<feature type="strand" evidence="9">
    <location>
        <begin position="363"/>
        <end position="365"/>
    </location>
</feature>
<feature type="helix" evidence="9">
    <location>
        <begin position="366"/>
        <end position="375"/>
    </location>
</feature>
<feature type="turn" evidence="9">
    <location>
        <begin position="376"/>
        <end position="378"/>
    </location>
</feature>
<proteinExistence type="evidence at protein level"/>
<comment type="function">
    <text evidence="1 6">Transcriptional repressor that binds to the promoter region of target genes. Plays a role in the regulation of the cell cycle and of the Wnt pathway. Binds preferentially to the sequence 5'-TTCATTCATTCA-3'. Binding to the histone H1.0 promoter is enhanced by interaction with RB1. Disrupts the interaction between DNA and TCF4 (By similarity).</text>
</comment>
<comment type="subunit">
    <text evidence="1 5 6">Binds TCF4 (By similarity). Binds RB1 (PubMed:9178770). Binds the second PAH repeat of SIN3A (PubMed:15235594).</text>
</comment>
<comment type="subcellular location">
    <subcellularLocation>
        <location evidence="2 5">Nucleus</location>
    </subcellularLocation>
</comment>
<comment type="alternative products">
    <event type="alternative splicing"/>
    <isoform>
        <id>Q8R316-1</id>
        <name>1</name>
        <sequence type="displayed"/>
    </isoform>
    <isoform>
        <id>Q8R316-2</id>
        <name>2</name>
        <sequence type="described" ref="VSP_014657"/>
    </isoform>
</comment>
<comment type="PTM">
    <text evidence="1">Ubiquitinated by the CTLH E3 ubiquitin-protein ligase complex, leading to subsequent proteasomal degradation.</text>
</comment>
<comment type="sequence caution" evidence="8">
    <conflict type="erroneous initiation">
        <sequence resource="EMBL-CDS" id="BAC38611"/>
    </conflict>
</comment>